<feature type="signal peptide" evidence="4">
    <location>
        <begin position="1"/>
        <end position="19"/>
    </location>
</feature>
<feature type="chain" id="PRO_0000022422" description="Statherin">
    <location>
        <begin position="20"/>
        <end position="62"/>
    </location>
</feature>
<feature type="region of interest" description="Hydroxyapatite-binding; inhibits crystal growth">
    <location>
        <begin position="20"/>
        <end position="25"/>
    </location>
</feature>
<feature type="region of interest" description="Hydrophobic; inhibits precipitation of calcium phosphate salts">
    <location>
        <begin position="38"/>
        <end position="62"/>
    </location>
</feature>
<feature type="modified residue" description="Phosphoserine" evidence="5">
    <location>
        <position position="21"/>
    </location>
</feature>
<feature type="modified residue" description="Phosphoserine" evidence="5">
    <location>
        <position position="22"/>
    </location>
</feature>
<feature type="cross-link" description="Isoglutamyl lysine isopeptide (Lys-Gln); in form cyclo-statherin Q-39">
    <location>
        <begin position="25"/>
        <end position="58"/>
    </location>
</feature>
<feature type="cross-link" description="Isoglutamyl lysine isopeptide (Lys-Gln); in form cyclo-statherin Q-37">
    <location>
        <begin position="25"/>
        <end position="56"/>
    </location>
</feature>
<feature type="splice variant" id="VSP_045744" description="In isoform 2." evidence="6">
    <location>
        <begin position="25"/>
        <end position="34"/>
    </location>
</feature>
<feature type="sequence variant" id="VAR_069065" evidence="1">
    <location>
        <position position="62"/>
    </location>
</feature>
<gene>
    <name type="primary">STATH</name>
</gene>
<dbReference type="EMBL" id="M18078">
    <property type="protein sequence ID" value="AAA60594.1"/>
    <property type="molecule type" value="mRNA"/>
</dbReference>
<dbReference type="EMBL" id="M18371">
    <property type="protein sequence ID" value="AAA60600.1"/>
    <property type="molecule type" value="mRNA"/>
</dbReference>
<dbReference type="EMBL" id="M32639">
    <property type="protein sequence ID" value="AAA60593.1"/>
    <property type="molecule type" value="Genomic_DNA"/>
</dbReference>
<dbReference type="EMBL" id="AK311812">
    <property type="protein sequence ID" value="BAG34755.1"/>
    <property type="molecule type" value="mRNA"/>
</dbReference>
<dbReference type="EMBL" id="AC063956">
    <property type="status" value="NOT_ANNOTATED_CDS"/>
    <property type="molecule type" value="Genomic_DNA"/>
</dbReference>
<dbReference type="EMBL" id="CH471057">
    <property type="protein sequence ID" value="EAX05604.1"/>
    <property type="molecule type" value="Genomic_DNA"/>
</dbReference>
<dbReference type="EMBL" id="CH471057">
    <property type="protein sequence ID" value="EAX05605.1"/>
    <property type="molecule type" value="Genomic_DNA"/>
</dbReference>
<dbReference type="EMBL" id="BC067219">
    <property type="protein sequence ID" value="AAH67219.1"/>
    <property type="molecule type" value="mRNA"/>
</dbReference>
<dbReference type="CCDS" id="CCDS33998.1">
    <molecule id="P02808-2"/>
</dbReference>
<dbReference type="CCDS" id="CCDS3533.1">
    <molecule id="P02808-1"/>
</dbReference>
<dbReference type="PIR" id="JH0153">
    <property type="entry name" value="SBHUP"/>
</dbReference>
<dbReference type="RefSeq" id="NP_001009181.1">
    <molecule id="P02808-2"/>
    <property type="nucleotide sequence ID" value="NM_001009181.2"/>
</dbReference>
<dbReference type="RefSeq" id="NP_003145.1">
    <molecule id="P02808-1"/>
    <property type="nucleotide sequence ID" value="NM_003154.3"/>
</dbReference>
<dbReference type="BioGRID" id="112656">
    <property type="interactions" value="57"/>
</dbReference>
<dbReference type="FunCoup" id="P02808">
    <property type="interactions" value="256"/>
</dbReference>
<dbReference type="IntAct" id="P02808">
    <property type="interactions" value="34"/>
</dbReference>
<dbReference type="MINT" id="P02808"/>
<dbReference type="STRING" id="9606.ENSP00000246895"/>
<dbReference type="TCDB" id="1.C.79.1.2">
    <property type="family name" value="the channel-forming histatin antimicrobial peptide (histatin) family"/>
</dbReference>
<dbReference type="iPTMnet" id="P02808"/>
<dbReference type="PhosphoSitePlus" id="P02808"/>
<dbReference type="BioMuta" id="STATH"/>
<dbReference type="jPOST" id="P02808"/>
<dbReference type="MassIVE" id="P02808"/>
<dbReference type="PaxDb" id="9606-ENSP00000246895"/>
<dbReference type="PeptideAtlas" id="P02808"/>
<dbReference type="PRIDE" id="P02808"/>
<dbReference type="ProteomicsDB" id="51602">
    <molecule id="P02808-1"/>
</dbReference>
<dbReference type="Pumba" id="P02808"/>
<dbReference type="TopDownProteomics" id="P02808-1">
    <molecule id="P02808-1"/>
</dbReference>
<dbReference type="TopDownProteomics" id="P02808-2">
    <molecule id="P02808-2"/>
</dbReference>
<dbReference type="Antibodypedia" id="44306">
    <property type="antibodies" value="62 antibodies from 15 providers"/>
</dbReference>
<dbReference type="DNASU" id="6779"/>
<dbReference type="Ensembl" id="ENST00000246895.9">
    <molecule id="P02808-1"/>
    <property type="protein sequence ID" value="ENSP00000246895.4"/>
    <property type="gene ID" value="ENSG00000126549.11"/>
</dbReference>
<dbReference type="Ensembl" id="ENST00000381060.2">
    <molecule id="P02808-2"/>
    <property type="protein sequence ID" value="ENSP00000370448.2"/>
    <property type="gene ID" value="ENSG00000126549.11"/>
</dbReference>
<dbReference type="Ensembl" id="ENST00000634727.1">
    <molecule id="P02808-2"/>
    <property type="protein sequence ID" value="ENSP00000489107.1"/>
    <property type="gene ID" value="ENSG00000282891.5"/>
</dbReference>
<dbReference type="Ensembl" id="ENST00000635686.2">
    <molecule id="P02808-1"/>
    <property type="protein sequence ID" value="ENSP00000489243.1"/>
    <property type="gene ID" value="ENSG00000282891.5"/>
</dbReference>
<dbReference type="GeneID" id="6779"/>
<dbReference type="KEGG" id="hsa:6779"/>
<dbReference type="MANE-Select" id="ENST00000246895.9">
    <property type="protein sequence ID" value="ENSP00000246895.4"/>
    <property type="RefSeq nucleotide sequence ID" value="NM_003154.3"/>
    <property type="RefSeq protein sequence ID" value="NP_003145.1"/>
</dbReference>
<dbReference type="UCSC" id="uc003heu.2">
    <molecule id="P02808-1"/>
    <property type="organism name" value="human"/>
</dbReference>
<dbReference type="AGR" id="HGNC:11369"/>
<dbReference type="CTD" id="6779"/>
<dbReference type="DisGeNET" id="6779"/>
<dbReference type="GeneCards" id="STATH"/>
<dbReference type="HGNC" id="HGNC:11369">
    <property type="gene designation" value="STATH"/>
</dbReference>
<dbReference type="HPA" id="ENSG00000126549">
    <property type="expression patterns" value="Tissue enriched (salivary)"/>
</dbReference>
<dbReference type="MIM" id="184470">
    <property type="type" value="gene"/>
</dbReference>
<dbReference type="neXtProt" id="NX_P02808"/>
<dbReference type="OpenTargets" id="ENSG00000126549"/>
<dbReference type="PharmGKB" id="PA36187"/>
<dbReference type="VEuPathDB" id="HostDB:ENSG00000126549"/>
<dbReference type="eggNOG" id="ENOG502TD50">
    <property type="taxonomic scope" value="Eukaryota"/>
</dbReference>
<dbReference type="GeneTree" id="ENSGT00940000164572"/>
<dbReference type="HOGENOM" id="CLU_208169_0_0_1"/>
<dbReference type="InParanoid" id="P02808"/>
<dbReference type="OMA" id="NRYPATW"/>
<dbReference type="OrthoDB" id="10383751at2759"/>
<dbReference type="PAN-GO" id="P02808">
    <property type="GO annotations" value="0 GO annotations based on evolutionary models"/>
</dbReference>
<dbReference type="PhylomeDB" id="P02808"/>
<dbReference type="TreeFam" id="TF341588"/>
<dbReference type="PathwayCommons" id="P02808"/>
<dbReference type="SignaLink" id="P02808"/>
<dbReference type="BioGRID-ORCS" id="6779">
    <property type="hits" value="13 hits in 1130 CRISPR screens"/>
</dbReference>
<dbReference type="ChiTaRS" id="STATH">
    <property type="organism name" value="human"/>
</dbReference>
<dbReference type="GeneWiki" id="STATH"/>
<dbReference type="GenomeRNAi" id="6779"/>
<dbReference type="Pharos" id="P02808">
    <property type="development level" value="Tbio"/>
</dbReference>
<dbReference type="PRO" id="PR:P02808"/>
<dbReference type="Proteomes" id="UP000005640">
    <property type="component" value="Chromosome 4"/>
</dbReference>
<dbReference type="RNAct" id="P02808">
    <property type="molecule type" value="protein"/>
</dbReference>
<dbReference type="Bgee" id="ENSG00000126549">
    <property type="expression patterns" value="Expressed in olfactory segment of nasal mucosa and 72 other cell types or tissues"/>
</dbReference>
<dbReference type="GO" id="GO:0005576">
    <property type="term" value="C:extracellular region"/>
    <property type="evidence" value="ECO:0000303"/>
    <property type="project" value="UniProtKB"/>
</dbReference>
<dbReference type="GO" id="GO:0030197">
    <property type="term" value="F:extracellular matrix constituent, lubricant activity"/>
    <property type="evidence" value="ECO:0000303"/>
    <property type="project" value="UniProtKB"/>
</dbReference>
<dbReference type="GO" id="GO:0046848">
    <property type="term" value="F:hydroxyapatite binding"/>
    <property type="evidence" value="ECO:0000303"/>
    <property type="project" value="UniProtKB"/>
</dbReference>
<dbReference type="GO" id="GO:0030345">
    <property type="term" value="F:structural constituent of tooth enamel"/>
    <property type="evidence" value="ECO:0000303"/>
    <property type="project" value="UniProtKB"/>
</dbReference>
<dbReference type="GO" id="GO:0031214">
    <property type="term" value="P:biomineral tissue development"/>
    <property type="evidence" value="ECO:0007669"/>
    <property type="project" value="UniProtKB-KW"/>
</dbReference>
<dbReference type="GO" id="GO:0042742">
    <property type="term" value="P:defense response to bacterium"/>
    <property type="evidence" value="ECO:0007669"/>
    <property type="project" value="InterPro"/>
</dbReference>
<dbReference type="GO" id="GO:0030502">
    <property type="term" value="P:negative regulation of bone mineralization"/>
    <property type="evidence" value="ECO:0000303"/>
    <property type="project" value="UniProtKB"/>
</dbReference>
<dbReference type="GO" id="GO:0001503">
    <property type="term" value="P:ossification"/>
    <property type="evidence" value="ECO:0000304"/>
    <property type="project" value="ProtInc"/>
</dbReference>
<dbReference type="GO" id="GO:0046541">
    <property type="term" value="P:saliva secretion"/>
    <property type="evidence" value="ECO:0000303"/>
    <property type="project" value="UniProtKB"/>
</dbReference>
<dbReference type="DisProt" id="DP02207"/>
<dbReference type="InterPro" id="IPR030773">
    <property type="entry name" value="Histatin/statherin"/>
</dbReference>
<dbReference type="InterPro" id="IPR005575">
    <property type="entry name" value="Statherin"/>
</dbReference>
<dbReference type="PANTHER" id="PTHR15057">
    <property type="entry name" value="STATHERIN"/>
    <property type="match status" value="1"/>
</dbReference>
<dbReference type="PANTHER" id="PTHR15057:SF3">
    <property type="entry name" value="STATHERIN"/>
    <property type="match status" value="1"/>
</dbReference>
<dbReference type="Pfam" id="PF03875">
    <property type="entry name" value="Statherin"/>
    <property type="match status" value="1"/>
</dbReference>
<dbReference type="PIRSF" id="PIRSF002565">
    <property type="entry name" value="Statherin"/>
    <property type="match status" value="1"/>
</dbReference>
<organism>
    <name type="scientific">Homo sapiens</name>
    <name type="common">Human</name>
    <dbReference type="NCBI Taxonomy" id="9606"/>
    <lineage>
        <taxon>Eukaryota</taxon>
        <taxon>Metazoa</taxon>
        <taxon>Chordata</taxon>
        <taxon>Craniata</taxon>
        <taxon>Vertebrata</taxon>
        <taxon>Euteleostomi</taxon>
        <taxon>Mammalia</taxon>
        <taxon>Eutheria</taxon>
        <taxon>Euarchontoglires</taxon>
        <taxon>Primates</taxon>
        <taxon>Haplorrhini</taxon>
        <taxon>Catarrhini</taxon>
        <taxon>Hominidae</taxon>
        <taxon>Homo</taxon>
    </lineage>
</organism>
<name>STAT_HUMAN</name>
<protein>
    <recommendedName>
        <fullName>Statherin</fullName>
    </recommendedName>
</protein>
<sequence>MKFLVFAFILALMVSMIGADSSEEKFLRRIGRFGYGYGPYQPVPEQPLYPQPYQPQYQQYTF</sequence>
<proteinExistence type="evidence at protein level"/>
<comment type="function">
    <text>Salivary protein that stabilizes saliva supersaturated with calcium salts by inhibiting the precipitation of calcium phosphate salts. It also modulates hydroxyapatite crystal formation on the tooth surface.</text>
</comment>
<comment type="interaction">
    <interactant intactId="EBI-738687">
        <id>P02808</id>
    </interactant>
    <interactant intactId="EBI-13059134">
        <id>Q13520</id>
        <label>AQP6</label>
    </interactant>
    <organismsDiffer>false</organismsDiffer>
    <experiments>3</experiments>
</comment>
<comment type="interaction">
    <interactant intactId="EBI-738687">
        <id>P02808</id>
    </interactant>
    <interactant intactId="EBI-12831318">
        <id>Q96Q80</id>
        <label>DERL3</label>
    </interactant>
    <organismsDiffer>false</organismsDiffer>
    <experiments>3</experiments>
</comment>
<comment type="interaction">
    <interactant intactId="EBI-738687">
        <id>P02808</id>
    </interactant>
    <interactant intactId="EBI-781551">
        <id>Q9Y282</id>
        <label>ERGIC3</label>
    </interactant>
    <organismsDiffer>false</organismsDiffer>
    <experiments>3</experiments>
</comment>
<comment type="interaction">
    <interactant intactId="EBI-738687">
        <id>P02808</id>
    </interactant>
    <interactant intactId="EBI-18304435">
        <id>Q5JX71</id>
        <label>FAM209A</label>
    </interactant>
    <organismsDiffer>false</organismsDiffer>
    <experiments>3</experiments>
</comment>
<comment type="interaction">
    <interactant intactId="EBI-738687">
        <id>P02808</id>
    </interactant>
    <interactant intactId="EBI-17443171">
        <id>Q96P31-6</id>
        <label>FCRL3</label>
    </interactant>
    <organismsDiffer>false</organismsDiffer>
    <experiments>3</experiments>
</comment>
<comment type="interaction">
    <interactant intactId="EBI-738687">
        <id>P02808</id>
    </interactant>
    <interactant intactId="EBI-12887376">
        <id>Q96LL3</id>
        <label>FIMP</label>
    </interactant>
    <organismsDiffer>false</organismsDiffer>
    <experiments>3</experiments>
</comment>
<comment type="interaction">
    <interactant intactId="EBI-738687">
        <id>P02808</id>
    </interactant>
    <interactant intactId="EBI-13345167">
        <id>Q8TDT2</id>
        <label>GPR152</label>
    </interactant>
    <organismsDiffer>false</organismsDiffer>
    <experiments>3</experiments>
</comment>
<comment type="interaction">
    <interactant intactId="EBI-738687">
        <id>P02808</id>
    </interactant>
    <interactant intactId="EBI-18076404">
        <id>O15529</id>
        <label>GPR42</label>
    </interactant>
    <organismsDiffer>false</organismsDiffer>
    <experiments>3</experiments>
</comment>
<comment type="interaction">
    <interactant intactId="EBI-738687">
        <id>P02808</id>
    </interactant>
    <interactant intactId="EBI-12017638">
        <id>P48051</id>
        <label>KCNJ6</label>
    </interactant>
    <organismsDiffer>false</organismsDiffer>
    <experiments>3</experiments>
</comment>
<comment type="interaction">
    <interactant intactId="EBI-738687">
        <id>P02808</id>
    </interactant>
    <interactant intactId="EBI-17490413">
        <id>A8MZ59</id>
        <label>LEUTX</label>
    </interactant>
    <organismsDiffer>false</organismsDiffer>
    <experiments>3</experiments>
</comment>
<comment type="interaction">
    <interactant intactId="EBI-738687">
        <id>P02808</id>
    </interactant>
    <interactant intactId="EBI-3920969">
        <id>Q6N075</id>
        <label>MFSD5</label>
    </interactant>
    <organismsDiffer>false</organismsDiffer>
    <experiments>3</experiments>
</comment>
<comment type="interaction">
    <interactant intactId="EBI-738687">
        <id>P02808</id>
    </interactant>
    <interactant intactId="EBI-5454865">
        <id>Q6IN84</id>
        <label>MRM1</label>
    </interactant>
    <organismsDiffer>false</organismsDiffer>
    <experiments>3</experiments>
</comment>
<comment type="interaction">
    <interactant intactId="EBI-738687">
        <id>P02808</id>
    </interactant>
    <interactant intactId="EBI-3923617">
        <id>Q9H2K0</id>
        <label>MTIF3</label>
    </interactant>
    <organismsDiffer>false</organismsDiffer>
    <experiments>3</experiments>
</comment>
<comment type="interaction">
    <interactant intactId="EBI-738687">
        <id>P02808</id>
    </interactant>
    <interactant intactId="EBI-738582">
        <id>Q8TAX7</id>
        <label>MUC7</label>
    </interactant>
    <organismsDiffer>false</organismsDiffer>
    <experiments>2</experiments>
</comment>
<comment type="interaction">
    <interactant intactId="EBI-738687">
        <id>P02808</id>
    </interactant>
    <interactant intactId="EBI-7545592">
        <id>Q9H6H4</id>
        <label>REEP4</label>
    </interactant>
    <organismsDiffer>false</organismsDiffer>
    <experiments>3</experiments>
</comment>
<comment type="interaction">
    <interactant intactId="EBI-738687">
        <id>P02808</id>
    </interactant>
    <interactant intactId="EBI-1046170">
        <id>O95470</id>
        <label>SGPL1</label>
    </interactant>
    <organismsDiffer>false</organismsDiffer>
    <experiments>3</experiments>
</comment>
<comment type="interaction">
    <interactant intactId="EBI-738687">
        <id>P02808</id>
    </interactant>
    <interactant intactId="EBI-18159983">
        <id>Q3KNW5</id>
        <label>SLC10A6</label>
    </interactant>
    <organismsDiffer>false</organismsDiffer>
    <experiments>3</experiments>
</comment>
<comment type="interaction">
    <interactant intactId="EBI-738687">
        <id>P02808</id>
    </interactant>
    <interactant intactId="EBI-12898013">
        <id>Q9NP94</id>
        <label>SLC39A2</label>
    </interactant>
    <organismsDiffer>false</organismsDiffer>
    <experiments>3</experiments>
</comment>
<comment type="interaction">
    <interactant intactId="EBI-738687">
        <id>P02808</id>
    </interactant>
    <interactant intactId="EBI-17848320">
        <id>Q6ZMD2-2</id>
        <label>SPNS3</label>
    </interactant>
    <organismsDiffer>false</organismsDiffer>
    <experiments>3</experiments>
</comment>
<comment type="interaction">
    <interactant intactId="EBI-738687">
        <id>P02808</id>
    </interactant>
    <interactant intactId="EBI-1049924">
        <id>Q00059</id>
        <label>TFAM</label>
    </interactant>
    <organismsDiffer>false</organismsDiffer>
    <experiments>3</experiments>
</comment>
<comment type="interaction">
    <interactant intactId="EBI-738687">
        <id>P02808</id>
    </interactant>
    <interactant intactId="EBI-12947623">
        <id>Q96MV1</id>
        <label>TLCD4</label>
    </interactant>
    <organismsDiffer>false</organismsDiffer>
    <experiments>3</experiments>
</comment>
<comment type="interaction">
    <interactant intactId="EBI-738687">
        <id>P02808</id>
    </interactant>
    <interactant intactId="EBI-11742770">
        <id>Q96HE8</id>
        <label>TMEM80</label>
    </interactant>
    <organismsDiffer>false</organismsDiffer>
    <experiments>3</experiments>
</comment>
<comment type="interaction">
    <interactant intactId="EBI-738687">
        <id>P02808</id>
    </interactant>
    <interactant intactId="EBI-6447886">
        <id>Q9Y320</id>
        <label>TMX2</label>
    </interactant>
    <organismsDiffer>false</organismsDiffer>
    <experiments>3</experiments>
</comment>
<comment type="subcellular location">
    <subcellularLocation>
        <location>Secreted</location>
    </subcellularLocation>
</comment>
<comment type="alternative products">
    <event type="alternative splicing"/>
    <isoform>
        <id>P02808-1</id>
        <name>1</name>
        <sequence type="displayed"/>
    </isoform>
    <isoform>
        <id>P02808-2</id>
        <name>2</name>
        <sequence type="described" ref="VSP_045744"/>
    </isoform>
    <text>Both isoforms can occur with the Phe-62 deletion.</text>
</comment>
<comment type="tissue specificity">
    <text>Secreted by parotid and submandibular glands.</text>
</comment>
<comment type="PTM">
    <text evidence="2">Substrate for transglutaminase-2. More than 95% of the cyclized peptide is cyclo-statherin Q-37, and less than 5% is cyclo-statherin Q-39. Cyclized forms account for about 1% of total statherin in saliva.</text>
</comment>
<comment type="PTM">
    <text evidence="3">Sulfated on tyrosine residues.</text>
</comment>
<comment type="mass spectrometry">
    <text>With phosphorylated Ser-21 and Ser-22.</text>
</comment>
<comment type="mass spectrometry">
    <text>With phosphorylated Ser-21 and Ser-22 and transglutamine cross-link.</text>
</comment>
<comment type="similarity">
    <text evidence="6">Belongs to the histatin/statherin family.</text>
</comment>
<accession>P02808</accession>
<accession>A6NKE9</accession>
<accession>B2R4F8</accession>
<keyword id="KW-0025">Alternative splicing</keyword>
<keyword id="KW-0091">Biomineralization</keyword>
<keyword id="KW-0903">Direct protein sequencing</keyword>
<keyword id="KW-1017">Isopeptide bond</keyword>
<keyword id="KW-0597">Phosphoprotein</keyword>
<keyword id="KW-1267">Proteomics identification</keyword>
<keyword id="KW-1185">Reference proteome</keyword>
<keyword id="KW-0964">Secreted</keyword>
<keyword id="KW-0732">Signal</keyword>
<keyword id="KW-0765">Sulfation</keyword>
<reference key="1">
    <citation type="journal article" date="1987" name="Am. J. Hum. Genet.">
        <title>cDNA cloning and chromosomal localization (4q11-13) of a gene for statherin, a regulator of calcium in saliva.</title>
        <authorList>
            <person name="Sabatinai L."/>
            <person name="Carlock L."/>
            <person name="Johnson G."/>
            <person name="Azen E."/>
        </authorList>
    </citation>
    <scope>NUCLEOTIDE SEQUENCE [MRNA] (ISOFORM 1)</scope>
</reference>
<reference key="2">
    <citation type="journal article" date="1987" name="Biochem. Biophys. Res. Commun.">
        <title>Human submandibular gland statherin and basic histidine-rich peptide are encoded by highly abundant mRNA's derived from a common ancestral sequence.</title>
        <authorList>
            <person name="Dickinson D.P."/>
            <person name="Ridall A.L."/>
            <person name="Levine M.J."/>
        </authorList>
    </citation>
    <scope>NUCLEOTIDE SEQUENCE [MRNA] (ISOFORM 1)</scope>
</reference>
<reference key="3">
    <citation type="journal article" date="1990" name="Gene">
        <title>Structure and sequence determination of the gene encoding human salivary statherin.</title>
        <authorList>
            <person name="Sabatini L.M."/>
            <person name="He Y.-Z."/>
            <person name="Azen E.A."/>
        </authorList>
    </citation>
    <scope>NUCLEOTIDE SEQUENCE [GENOMIC DNA]</scope>
</reference>
<reference key="4">
    <citation type="journal article" date="2004" name="Nat. Genet.">
        <title>Complete sequencing and characterization of 21,243 full-length human cDNAs.</title>
        <authorList>
            <person name="Ota T."/>
            <person name="Suzuki Y."/>
            <person name="Nishikawa T."/>
            <person name="Otsuki T."/>
            <person name="Sugiyama T."/>
            <person name="Irie R."/>
            <person name="Wakamatsu A."/>
            <person name="Hayashi K."/>
            <person name="Sato H."/>
            <person name="Nagai K."/>
            <person name="Kimura K."/>
            <person name="Makita H."/>
            <person name="Sekine M."/>
            <person name="Obayashi M."/>
            <person name="Nishi T."/>
            <person name="Shibahara T."/>
            <person name="Tanaka T."/>
            <person name="Ishii S."/>
            <person name="Yamamoto J."/>
            <person name="Saito K."/>
            <person name="Kawai Y."/>
            <person name="Isono Y."/>
            <person name="Nakamura Y."/>
            <person name="Nagahari K."/>
            <person name="Murakami K."/>
            <person name="Yasuda T."/>
            <person name="Iwayanagi T."/>
            <person name="Wagatsuma M."/>
            <person name="Shiratori A."/>
            <person name="Sudo H."/>
            <person name="Hosoiri T."/>
            <person name="Kaku Y."/>
            <person name="Kodaira H."/>
            <person name="Kondo H."/>
            <person name="Sugawara M."/>
            <person name="Takahashi M."/>
            <person name="Kanda K."/>
            <person name="Yokoi T."/>
            <person name="Furuya T."/>
            <person name="Kikkawa E."/>
            <person name="Omura Y."/>
            <person name="Abe K."/>
            <person name="Kamihara K."/>
            <person name="Katsuta N."/>
            <person name="Sato K."/>
            <person name="Tanikawa M."/>
            <person name="Yamazaki M."/>
            <person name="Ninomiya K."/>
            <person name="Ishibashi T."/>
            <person name="Yamashita H."/>
            <person name="Murakawa K."/>
            <person name="Fujimori K."/>
            <person name="Tanai H."/>
            <person name="Kimata M."/>
            <person name="Watanabe M."/>
            <person name="Hiraoka S."/>
            <person name="Chiba Y."/>
            <person name="Ishida S."/>
            <person name="Ono Y."/>
            <person name="Takiguchi S."/>
            <person name="Watanabe S."/>
            <person name="Yosida M."/>
            <person name="Hotuta T."/>
            <person name="Kusano J."/>
            <person name="Kanehori K."/>
            <person name="Takahashi-Fujii A."/>
            <person name="Hara H."/>
            <person name="Tanase T.-O."/>
            <person name="Nomura Y."/>
            <person name="Togiya S."/>
            <person name="Komai F."/>
            <person name="Hara R."/>
            <person name="Takeuchi K."/>
            <person name="Arita M."/>
            <person name="Imose N."/>
            <person name="Musashino K."/>
            <person name="Yuuki H."/>
            <person name="Oshima A."/>
            <person name="Sasaki N."/>
            <person name="Aotsuka S."/>
            <person name="Yoshikawa Y."/>
            <person name="Matsunawa H."/>
            <person name="Ichihara T."/>
            <person name="Shiohata N."/>
            <person name="Sano S."/>
            <person name="Moriya S."/>
            <person name="Momiyama H."/>
            <person name="Satoh N."/>
            <person name="Takami S."/>
            <person name="Terashima Y."/>
            <person name="Suzuki O."/>
            <person name="Nakagawa S."/>
            <person name="Senoh A."/>
            <person name="Mizoguchi H."/>
            <person name="Goto Y."/>
            <person name="Shimizu F."/>
            <person name="Wakebe H."/>
            <person name="Hishigaki H."/>
            <person name="Watanabe T."/>
            <person name="Sugiyama A."/>
            <person name="Takemoto M."/>
            <person name="Kawakami B."/>
            <person name="Yamazaki M."/>
            <person name="Watanabe K."/>
            <person name="Kumagai A."/>
            <person name="Itakura S."/>
            <person name="Fukuzumi Y."/>
            <person name="Fujimori Y."/>
            <person name="Komiyama M."/>
            <person name="Tashiro H."/>
            <person name="Tanigami A."/>
            <person name="Fujiwara T."/>
            <person name="Ono T."/>
            <person name="Yamada K."/>
            <person name="Fujii Y."/>
            <person name="Ozaki K."/>
            <person name="Hirao M."/>
            <person name="Ohmori Y."/>
            <person name="Kawabata A."/>
            <person name="Hikiji T."/>
            <person name="Kobatake N."/>
            <person name="Inagaki H."/>
            <person name="Ikema Y."/>
            <person name="Okamoto S."/>
            <person name="Okitani R."/>
            <person name="Kawakami T."/>
            <person name="Noguchi S."/>
            <person name="Itoh T."/>
            <person name="Shigeta K."/>
            <person name="Senba T."/>
            <person name="Matsumura K."/>
            <person name="Nakajima Y."/>
            <person name="Mizuno T."/>
            <person name="Morinaga M."/>
            <person name="Sasaki M."/>
            <person name="Togashi T."/>
            <person name="Oyama M."/>
            <person name="Hata H."/>
            <person name="Watanabe M."/>
            <person name="Komatsu T."/>
            <person name="Mizushima-Sugano J."/>
            <person name="Satoh T."/>
            <person name="Shirai Y."/>
            <person name="Takahashi Y."/>
            <person name="Nakagawa K."/>
            <person name="Okumura K."/>
            <person name="Nagase T."/>
            <person name="Nomura N."/>
            <person name="Kikuchi H."/>
            <person name="Masuho Y."/>
            <person name="Yamashita R."/>
            <person name="Nakai K."/>
            <person name="Yada T."/>
            <person name="Nakamura Y."/>
            <person name="Ohara O."/>
            <person name="Isogai T."/>
            <person name="Sugano S."/>
        </authorList>
    </citation>
    <scope>NUCLEOTIDE SEQUENCE [LARGE SCALE MRNA] (ISOFORM 1)</scope>
    <source>
        <tissue>Trachea</tissue>
    </source>
</reference>
<reference key="5">
    <citation type="journal article" date="2005" name="Nature">
        <title>Generation and annotation of the DNA sequences of human chromosomes 2 and 4.</title>
        <authorList>
            <person name="Hillier L.W."/>
            <person name="Graves T.A."/>
            <person name="Fulton R.S."/>
            <person name="Fulton L.A."/>
            <person name="Pepin K.H."/>
            <person name="Minx P."/>
            <person name="Wagner-McPherson C."/>
            <person name="Layman D."/>
            <person name="Wylie K."/>
            <person name="Sekhon M."/>
            <person name="Becker M.C."/>
            <person name="Fewell G.A."/>
            <person name="Delehaunty K.D."/>
            <person name="Miner T.L."/>
            <person name="Nash W.E."/>
            <person name="Kremitzki C."/>
            <person name="Oddy L."/>
            <person name="Du H."/>
            <person name="Sun H."/>
            <person name="Bradshaw-Cordum H."/>
            <person name="Ali J."/>
            <person name="Carter J."/>
            <person name="Cordes M."/>
            <person name="Harris A."/>
            <person name="Isak A."/>
            <person name="van Brunt A."/>
            <person name="Nguyen C."/>
            <person name="Du F."/>
            <person name="Courtney L."/>
            <person name="Kalicki J."/>
            <person name="Ozersky P."/>
            <person name="Abbott S."/>
            <person name="Armstrong J."/>
            <person name="Belter E.A."/>
            <person name="Caruso L."/>
            <person name="Cedroni M."/>
            <person name="Cotton M."/>
            <person name="Davidson T."/>
            <person name="Desai A."/>
            <person name="Elliott G."/>
            <person name="Erb T."/>
            <person name="Fronick C."/>
            <person name="Gaige T."/>
            <person name="Haakenson W."/>
            <person name="Haglund K."/>
            <person name="Holmes A."/>
            <person name="Harkins R."/>
            <person name="Kim K."/>
            <person name="Kruchowski S.S."/>
            <person name="Strong C.M."/>
            <person name="Grewal N."/>
            <person name="Goyea E."/>
            <person name="Hou S."/>
            <person name="Levy A."/>
            <person name="Martinka S."/>
            <person name="Mead K."/>
            <person name="McLellan M.D."/>
            <person name="Meyer R."/>
            <person name="Randall-Maher J."/>
            <person name="Tomlinson C."/>
            <person name="Dauphin-Kohlberg S."/>
            <person name="Kozlowicz-Reilly A."/>
            <person name="Shah N."/>
            <person name="Swearengen-Shahid S."/>
            <person name="Snider J."/>
            <person name="Strong J.T."/>
            <person name="Thompson J."/>
            <person name="Yoakum M."/>
            <person name="Leonard S."/>
            <person name="Pearman C."/>
            <person name="Trani L."/>
            <person name="Radionenko M."/>
            <person name="Waligorski J.E."/>
            <person name="Wang C."/>
            <person name="Rock S.M."/>
            <person name="Tin-Wollam A.-M."/>
            <person name="Maupin R."/>
            <person name="Latreille P."/>
            <person name="Wendl M.C."/>
            <person name="Yang S.-P."/>
            <person name="Pohl C."/>
            <person name="Wallis J.W."/>
            <person name="Spieth J."/>
            <person name="Bieri T.A."/>
            <person name="Berkowicz N."/>
            <person name="Nelson J.O."/>
            <person name="Osborne J."/>
            <person name="Ding L."/>
            <person name="Meyer R."/>
            <person name="Sabo A."/>
            <person name="Shotland Y."/>
            <person name="Sinha P."/>
            <person name="Wohldmann P.E."/>
            <person name="Cook L.L."/>
            <person name="Hickenbotham M.T."/>
            <person name="Eldred J."/>
            <person name="Williams D."/>
            <person name="Jones T.A."/>
            <person name="She X."/>
            <person name="Ciccarelli F.D."/>
            <person name="Izaurralde E."/>
            <person name="Taylor J."/>
            <person name="Schmutz J."/>
            <person name="Myers R.M."/>
            <person name="Cox D.R."/>
            <person name="Huang X."/>
            <person name="McPherson J.D."/>
            <person name="Mardis E.R."/>
            <person name="Clifton S.W."/>
            <person name="Warren W.C."/>
            <person name="Chinwalla A.T."/>
            <person name="Eddy S.R."/>
            <person name="Marra M.A."/>
            <person name="Ovcharenko I."/>
            <person name="Furey T.S."/>
            <person name="Miller W."/>
            <person name="Eichler E.E."/>
            <person name="Bork P."/>
            <person name="Suyama M."/>
            <person name="Torrents D."/>
            <person name="Waterston R.H."/>
            <person name="Wilson R.K."/>
        </authorList>
    </citation>
    <scope>NUCLEOTIDE SEQUENCE [LARGE SCALE GENOMIC DNA]</scope>
</reference>
<reference key="6">
    <citation type="submission" date="2005-07" db="EMBL/GenBank/DDBJ databases">
        <authorList>
            <person name="Mural R.J."/>
            <person name="Istrail S."/>
            <person name="Sutton G.G."/>
            <person name="Florea L."/>
            <person name="Halpern A.L."/>
            <person name="Mobarry C.M."/>
            <person name="Lippert R."/>
            <person name="Walenz B."/>
            <person name="Shatkay H."/>
            <person name="Dew I."/>
            <person name="Miller J.R."/>
            <person name="Flanigan M.J."/>
            <person name="Edwards N.J."/>
            <person name="Bolanos R."/>
            <person name="Fasulo D."/>
            <person name="Halldorsson B.V."/>
            <person name="Hannenhalli S."/>
            <person name="Turner R."/>
            <person name="Yooseph S."/>
            <person name="Lu F."/>
            <person name="Nusskern D.R."/>
            <person name="Shue B.C."/>
            <person name="Zheng X.H."/>
            <person name="Zhong F."/>
            <person name="Delcher A.L."/>
            <person name="Huson D.H."/>
            <person name="Kravitz S.A."/>
            <person name="Mouchard L."/>
            <person name="Reinert K."/>
            <person name="Remington K.A."/>
            <person name="Clark A.G."/>
            <person name="Waterman M.S."/>
            <person name="Eichler E.E."/>
            <person name="Adams M.D."/>
            <person name="Hunkapiller M.W."/>
            <person name="Myers E.W."/>
            <person name="Venter J.C."/>
        </authorList>
    </citation>
    <scope>NUCLEOTIDE SEQUENCE [LARGE SCALE GENOMIC DNA]</scope>
</reference>
<reference key="7">
    <citation type="journal article" date="2004" name="Genome Res.">
        <title>The status, quality, and expansion of the NIH full-length cDNA project: the Mammalian Gene Collection (MGC).</title>
        <authorList>
            <consortium name="The MGC Project Team"/>
        </authorList>
    </citation>
    <scope>NUCLEOTIDE SEQUENCE [LARGE SCALE MRNA] (ISOFORM 1)</scope>
    <source>
        <tissue>Thyroid</tissue>
    </source>
</reference>
<reference key="8">
    <citation type="journal article" date="1977" name="J. Biol. Chem.">
        <title>Complete covalent structure of statherin, a tyrosine-rich acidic peptide which inhibits calcium phosphate precipitation from human parotid saliva.</title>
        <authorList>
            <person name="Schlesinger D.H."/>
            <person name="Hay D.I."/>
        </authorList>
    </citation>
    <scope>PROTEIN SEQUENCE OF 20-62 (ISOFORM 1)</scope>
    <scope>PHOSPHORYLATION AT SER-21 AND SER-22</scope>
</reference>
<reference key="9">
    <citation type="journal article" date="1991" name="Arch. Oral Biol.">
        <title>Multiple forms of statherin in human salivary secretions.</title>
        <authorList>
            <person name="Jensen J.L."/>
            <person name="Lamkin M.S."/>
            <person name="Troxler R.F."/>
            <person name="Oppenheim F.G."/>
        </authorList>
    </citation>
    <scope>PROTEIN SEQUENCE OF 20-62 (ISOFORMS 1 AND 2)</scope>
    <scope>VARIANT PHE-62 DEL</scope>
    <scope>IDENTIFICATION BY MASS SPECTROMETRY</scope>
</reference>
<reference key="10">
    <citation type="journal article" date="1987" name="J. Dent. Res.">
        <title>Molecular basis of salivary proline-rich protein and peptide synthesis: cell-free translations and processing of human and macaque statherin mRNAs and partial amino acid sequence of their signal peptides.</title>
        <authorList>
            <person name="Oppenheim F.G."/>
            <person name="Hay D.I."/>
            <person name="Smith D.J."/>
            <person name="Offner G.D."/>
            <person name="Troxler R.F."/>
        </authorList>
    </citation>
    <scope>PARTIAL PROTEIN SEQUENCE OF 1-16</scope>
</reference>
<reference key="11">
    <citation type="journal article" date="2007" name="Int. J. Biol. Sci.">
        <title>Tyrosine sulfation of statherin.</title>
        <authorList>
            <person name="Kasinathan C."/>
            <person name="Gandhi N."/>
            <person name="Ramaprasad P."/>
            <person name="Sundaram P."/>
            <person name="Ramasubbu N."/>
        </authorList>
    </citation>
    <scope>PROTEIN SEQUENCE OF 20-62 (ISOFORM 1)</scope>
    <scope>SULFATION</scope>
</reference>
<reference key="12">
    <citation type="journal article" date="2006" name="J. Sep. Sci.">
        <title>HPLC-MS characterization of cyclo-statherin Q-37, a specific cyclization product of human salivary statherin generated by transglutaminase 2.</title>
        <authorList>
            <person name="Cabras T."/>
            <person name="Inzitari R."/>
            <person name="Fanali C."/>
            <person name="Scarano E."/>
            <person name="Patamia M."/>
            <person name="Sanna M.T."/>
            <person name="Pisano E."/>
            <person name="Giardina B."/>
            <person name="Castagnola M."/>
            <person name="Messana I."/>
        </authorList>
    </citation>
    <scope>TRANSGLUTAMINATION</scope>
    <scope>MASS SPECTROMETRY</scope>
</reference>
<reference key="13">
    <citation type="journal article" date="2015" name="Proteomics">
        <title>N-terminome analysis of the human mitochondrial proteome.</title>
        <authorList>
            <person name="Vaca Jacome A.S."/>
            <person name="Rabilloud T."/>
            <person name="Schaeffer-Reiss C."/>
            <person name="Rompais M."/>
            <person name="Ayoub D."/>
            <person name="Lane L."/>
            <person name="Bairoch A."/>
            <person name="Van Dorsselaer A."/>
            <person name="Carapito C."/>
        </authorList>
    </citation>
    <scope>IDENTIFICATION BY MASS SPECTROMETRY [LARGE SCALE ANALYSIS]</scope>
</reference>
<evidence type="ECO:0000269" key="1">
    <source>
    </source>
</evidence>
<evidence type="ECO:0000269" key="2">
    <source>
    </source>
</evidence>
<evidence type="ECO:0000269" key="3">
    <source>
    </source>
</evidence>
<evidence type="ECO:0000269" key="4">
    <source>
    </source>
</evidence>
<evidence type="ECO:0000269" key="5">
    <source>
    </source>
</evidence>
<evidence type="ECO:0000305" key="6"/>